<keyword id="KW-0963">Cytoplasm</keyword>
<keyword id="KW-0448">Lipopolysaccharide biosynthesis</keyword>
<keyword id="KW-0548">Nucleotidyltransferase</keyword>
<keyword id="KW-0808">Transferase</keyword>
<gene>
    <name evidence="1" type="primary">kdsB</name>
    <name type="ordered locus">jhp_0215</name>
</gene>
<sequence>MIIIPARLKSSRFENKMLEDIFGLPMVVRCAKNANLVDECVVACDDESIMKACQKFHIKAVLTSKHHNSGTERCLEAAQILGLKNDERVLNLQGDEPFLEKKVILALLEATQNAPFMATCAKVIDEEQAKSPNLVKVVLDSQNNALYFSRSLIPFLRDFDAKRQTPLLGHIGIYGFHNKEILEELCALKPCVLEDTEKLEQLRALYYQKKILVKIVQSESMGIDTKEDLQNALKIFSPNLLKR</sequence>
<proteinExistence type="inferred from homology"/>
<accession>Q9ZMK4</accession>
<dbReference type="EC" id="2.7.7.38" evidence="1"/>
<dbReference type="EMBL" id="AE001439">
    <property type="protein sequence ID" value="AAD05802.1"/>
    <property type="molecule type" value="Genomic_DNA"/>
</dbReference>
<dbReference type="PIR" id="B71958">
    <property type="entry name" value="B71958"/>
</dbReference>
<dbReference type="RefSeq" id="WP_000583975.1">
    <property type="nucleotide sequence ID" value="NC_000921.1"/>
</dbReference>
<dbReference type="SMR" id="Q9ZMK4"/>
<dbReference type="KEGG" id="hpj:jhp_0215"/>
<dbReference type="PATRIC" id="fig|85963.30.peg.800"/>
<dbReference type="eggNOG" id="COG1212">
    <property type="taxonomic scope" value="Bacteria"/>
</dbReference>
<dbReference type="UniPathway" id="UPA00030"/>
<dbReference type="UniPathway" id="UPA00358">
    <property type="reaction ID" value="UER00476"/>
</dbReference>
<dbReference type="Proteomes" id="UP000000804">
    <property type="component" value="Chromosome"/>
</dbReference>
<dbReference type="GO" id="GO:0005829">
    <property type="term" value="C:cytosol"/>
    <property type="evidence" value="ECO:0007669"/>
    <property type="project" value="TreeGrafter"/>
</dbReference>
<dbReference type="GO" id="GO:0008690">
    <property type="term" value="F:3-deoxy-manno-octulosonate cytidylyltransferase activity"/>
    <property type="evidence" value="ECO:0007669"/>
    <property type="project" value="UniProtKB-UniRule"/>
</dbReference>
<dbReference type="GO" id="GO:0033468">
    <property type="term" value="P:CMP-keto-3-deoxy-D-manno-octulosonic acid biosynthetic process"/>
    <property type="evidence" value="ECO:0007669"/>
    <property type="project" value="UniProtKB-UniRule"/>
</dbReference>
<dbReference type="GO" id="GO:0009103">
    <property type="term" value="P:lipopolysaccharide biosynthetic process"/>
    <property type="evidence" value="ECO:0007669"/>
    <property type="project" value="UniProtKB-UniRule"/>
</dbReference>
<dbReference type="CDD" id="cd02517">
    <property type="entry name" value="CMP-KDO-Synthetase"/>
    <property type="match status" value="1"/>
</dbReference>
<dbReference type="Gene3D" id="3.90.550.10">
    <property type="entry name" value="Spore Coat Polysaccharide Biosynthesis Protein SpsA, Chain A"/>
    <property type="match status" value="1"/>
</dbReference>
<dbReference type="HAMAP" id="MF_00057">
    <property type="entry name" value="KdsB"/>
    <property type="match status" value="1"/>
</dbReference>
<dbReference type="InterPro" id="IPR003329">
    <property type="entry name" value="Cytidylyl_trans"/>
</dbReference>
<dbReference type="InterPro" id="IPR004528">
    <property type="entry name" value="KdsB"/>
</dbReference>
<dbReference type="InterPro" id="IPR029044">
    <property type="entry name" value="Nucleotide-diphossugar_trans"/>
</dbReference>
<dbReference type="NCBIfam" id="TIGR00466">
    <property type="entry name" value="kdsB"/>
    <property type="match status" value="1"/>
</dbReference>
<dbReference type="NCBIfam" id="NF003952">
    <property type="entry name" value="PRK05450.1-5"/>
    <property type="match status" value="1"/>
</dbReference>
<dbReference type="PANTHER" id="PTHR42866">
    <property type="entry name" value="3-DEOXY-MANNO-OCTULOSONATE CYTIDYLYLTRANSFERASE"/>
    <property type="match status" value="1"/>
</dbReference>
<dbReference type="PANTHER" id="PTHR42866:SF2">
    <property type="entry name" value="3-DEOXY-MANNO-OCTULOSONATE CYTIDYLYLTRANSFERASE, MITOCHONDRIAL"/>
    <property type="match status" value="1"/>
</dbReference>
<dbReference type="Pfam" id="PF02348">
    <property type="entry name" value="CTP_transf_3"/>
    <property type="match status" value="1"/>
</dbReference>
<dbReference type="SUPFAM" id="SSF53448">
    <property type="entry name" value="Nucleotide-diphospho-sugar transferases"/>
    <property type="match status" value="1"/>
</dbReference>
<organism>
    <name type="scientific">Helicobacter pylori (strain J99 / ATCC 700824)</name>
    <name type="common">Campylobacter pylori J99</name>
    <dbReference type="NCBI Taxonomy" id="85963"/>
    <lineage>
        <taxon>Bacteria</taxon>
        <taxon>Pseudomonadati</taxon>
        <taxon>Campylobacterota</taxon>
        <taxon>Epsilonproteobacteria</taxon>
        <taxon>Campylobacterales</taxon>
        <taxon>Helicobacteraceae</taxon>
        <taxon>Helicobacter</taxon>
    </lineage>
</organism>
<feature type="chain" id="PRO_0000188508" description="3-deoxy-manno-octulosonate cytidylyltransferase">
    <location>
        <begin position="1"/>
        <end position="243"/>
    </location>
</feature>
<protein>
    <recommendedName>
        <fullName evidence="1">3-deoxy-manno-octulosonate cytidylyltransferase</fullName>
        <ecNumber evidence="1">2.7.7.38</ecNumber>
    </recommendedName>
    <alternativeName>
        <fullName evidence="1">CMP-2-keto-3-deoxyoctulosonic acid synthase</fullName>
        <shortName evidence="1">CKS</shortName>
        <shortName evidence="1">CMP-KDO synthase</shortName>
    </alternativeName>
</protein>
<evidence type="ECO:0000255" key="1">
    <source>
        <dbReference type="HAMAP-Rule" id="MF_00057"/>
    </source>
</evidence>
<name>KDSB_HELPJ</name>
<comment type="function">
    <text evidence="1">Activates KDO (a required 8-carbon sugar) for incorporation into bacterial lipopolysaccharide in Gram-negative bacteria.</text>
</comment>
<comment type="catalytic activity">
    <reaction evidence="1">
        <text>3-deoxy-alpha-D-manno-oct-2-ulosonate + CTP = CMP-3-deoxy-beta-D-manno-octulosonate + diphosphate</text>
        <dbReference type="Rhea" id="RHEA:23448"/>
        <dbReference type="ChEBI" id="CHEBI:33019"/>
        <dbReference type="ChEBI" id="CHEBI:37563"/>
        <dbReference type="ChEBI" id="CHEBI:85986"/>
        <dbReference type="ChEBI" id="CHEBI:85987"/>
        <dbReference type="EC" id="2.7.7.38"/>
    </reaction>
</comment>
<comment type="pathway">
    <text evidence="1">Nucleotide-sugar biosynthesis; CMP-3-deoxy-D-manno-octulosonate biosynthesis; CMP-3-deoxy-D-manno-octulosonate from 3-deoxy-D-manno-octulosonate and CTP: step 1/1.</text>
</comment>
<comment type="pathway">
    <text evidence="1">Bacterial outer membrane biogenesis; lipopolysaccharide biosynthesis.</text>
</comment>
<comment type="subcellular location">
    <subcellularLocation>
        <location evidence="1">Cytoplasm</location>
    </subcellularLocation>
</comment>
<comment type="similarity">
    <text evidence="1">Belongs to the KdsB family.</text>
</comment>
<reference key="1">
    <citation type="journal article" date="1999" name="Nature">
        <title>Genomic sequence comparison of two unrelated isolates of the human gastric pathogen Helicobacter pylori.</title>
        <authorList>
            <person name="Alm R.A."/>
            <person name="Ling L.-S.L."/>
            <person name="Moir D.T."/>
            <person name="King B.L."/>
            <person name="Brown E.D."/>
            <person name="Doig P.C."/>
            <person name="Smith D.R."/>
            <person name="Noonan B."/>
            <person name="Guild B.C."/>
            <person name="deJonge B.L."/>
            <person name="Carmel G."/>
            <person name="Tummino P.J."/>
            <person name="Caruso A."/>
            <person name="Uria-Nickelsen M."/>
            <person name="Mills D.M."/>
            <person name="Ives C."/>
            <person name="Gibson R."/>
            <person name="Merberg D."/>
            <person name="Mills S.D."/>
            <person name="Jiang Q."/>
            <person name="Taylor D.E."/>
            <person name="Vovis G.F."/>
            <person name="Trust T.J."/>
        </authorList>
    </citation>
    <scope>NUCLEOTIDE SEQUENCE [LARGE SCALE GENOMIC DNA]</scope>
    <source>
        <strain>J99 / ATCC 700824</strain>
    </source>
</reference>